<comment type="subcellular location">
    <subcellularLocation>
        <location evidence="2">Cell membrane</location>
        <topology evidence="1">Multi-pass membrane protein</topology>
    </subcellularLocation>
</comment>
<comment type="similarity">
    <text evidence="2">Belongs to the resistance-nodulation-cell division (RND) (TC 2.A.6) family. MmpL subfamily.</text>
</comment>
<dbReference type="EMBL" id="LT708304">
    <property type="protein sequence ID" value="SIT99816.1"/>
    <property type="molecule type" value="Genomic_DNA"/>
</dbReference>
<dbReference type="RefSeq" id="NP_854869.1">
    <property type="nucleotide sequence ID" value="NC_002945.3"/>
</dbReference>
<dbReference type="SMR" id="P65373"/>
<dbReference type="KEGG" id="mbo:BQ2027_MB1215"/>
<dbReference type="PATRIC" id="fig|233413.5.peg.1334"/>
<dbReference type="Proteomes" id="UP000001419">
    <property type="component" value="Chromosome"/>
</dbReference>
<dbReference type="GO" id="GO:0005886">
    <property type="term" value="C:plasma membrane"/>
    <property type="evidence" value="ECO:0007669"/>
    <property type="project" value="UniProtKB-SubCell"/>
</dbReference>
<dbReference type="FunFam" id="1.20.1640.10:FF:000018">
    <property type="entry name" value="Transmembrane transport protein MmpL10"/>
    <property type="match status" value="1"/>
</dbReference>
<dbReference type="FunFam" id="1.20.1640.10:FF:000020">
    <property type="entry name" value="Transmembrane transport protein MmpL10"/>
    <property type="match status" value="1"/>
</dbReference>
<dbReference type="Gene3D" id="1.20.1640.10">
    <property type="entry name" value="Multidrug efflux transporter AcrB transmembrane domain"/>
    <property type="match status" value="2"/>
</dbReference>
<dbReference type="InterPro" id="IPR004869">
    <property type="entry name" value="MMPL_dom"/>
</dbReference>
<dbReference type="InterPro" id="IPR004707">
    <property type="entry name" value="MmpL_fam"/>
</dbReference>
<dbReference type="InterPro" id="IPR050545">
    <property type="entry name" value="Mycobact_MmpL"/>
</dbReference>
<dbReference type="NCBIfam" id="TIGR00833">
    <property type="entry name" value="actII"/>
    <property type="match status" value="1"/>
</dbReference>
<dbReference type="PANTHER" id="PTHR33406">
    <property type="entry name" value="MEMBRANE PROTEIN MJ1562-RELATED"/>
    <property type="match status" value="1"/>
</dbReference>
<dbReference type="PANTHER" id="PTHR33406:SF6">
    <property type="entry name" value="MEMBRANE PROTEIN YDGH-RELATED"/>
    <property type="match status" value="1"/>
</dbReference>
<dbReference type="Pfam" id="PF03176">
    <property type="entry name" value="MMPL"/>
    <property type="match status" value="2"/>
</dbReference>
<dbReference type="SUPFAM" id="SSF82866">
    <property type="entry name" value="Multidrug efflux transporter AcrB transmembrane domain"/>
    <property type="match status" value="2"/>
</dbReference>
<gene>
    <name type="primary">mmpL10</name>
    <name type="ordered locus">BQ2027_MB1215</name>
</gene>
<organism>
    <name type="scientific">Mycobacterium bovis (strain ATCC BAA-935 / AF2122/97)</name>
    <dbReference type="NCBI Taxonomy" id="233413"/>
    <lineage>
        <taxon>Bacteria</taxon>
        <taxon>Bacillati</taxon>
        <taxon>Actinomycetota</taxon>
        <taxon>Actinomycetes</taxon>
        <taxon>Mycobacteriales</taxon>
        <taxon>Mycobacteriaceae</taxon>
        <taxon>Mycobacterium</taxon>
        <taxon>Mycobacterium tuberculosis complex</taxon>
    </lineage>
</organism>
<keyword id="KW-1003">Cell membrane</keyword>
<keyword id="KW-0472">Membrane</keyword>
<keyword id="KW-1185">Reference proteome</keyword>
<keyword id="KW-0812">Transmembrane</keyword>
<keyword id="KW-1133">Transmembrane helix</keyword>
<keyword id="KW-0813">Transport</keyword>
<reference key="1">
    <citation type="journal article" date="2003" name="Proc. Natl. Acad. Sci. U.S.A.">
        <title>The complete genome sequence of Mycobacterium bovis.</title>
        <authorList>
            <person name="Garnier T."/>
            <person name="Eiglmeier K."/>
            <person name="Camus J.-C."/>
            <person name="Medina N."/>
            <person name="Mansoor H."/>
            <person name="Pryor M."/>
            <person name="Duthoy S."/>
            <person name="Grondin S."/>
            <person name="Lacroix C."/>
            <person name="Monsempe C."/>
            <person name="Simon S."/>
            <person name="Harris B."/>
            <person name="Atkin R."/>
            <person name="Doggett J."/>
            <person name="Mayes R."/>
            <person name="Keating L."/>
            <person name="Wheeler P.R."/>
            <person name="Parkhill J."/>
            <person name="Barrell B.G."/>
            <person name="Cole S.T."/>
            <person name="Gordon S.V."/>
            <person name="Hewinson R.G."/>
        </authorList>
    </citation>
    <scope>NUCLEOTIDE SEQUENCE [LARGE SCALE GENOMIC DNA]</scope>
    <source>
        <strain>ATCC BAA-935 / AF2122/97</strain>
    </source>
</reference>
<reference key="2">
    <citation type="journal article" date="2017" name="Genome Announc.">
        <title>Updated reference genome sequence and annotation of Mycobacterium bovis AF2122/97.</title>
        <authorList>
            <person name="Malone K.M."/>
            <person name="Farrell D."/>
            <person name="Stuber T.P."/>
            <person name="Schubert O.T."/>
            <person name="Aebersold R."/>
            <person name="Robbe-Austerman S."/>
            <person name="Gordon S.V."/>
        </authorList>
    </citation>
    <scope>NUCLEOTIDE SEQUENCE [LARGE SCALE GENOMIC DNA]</scope>
    <scope>GENOME REANNOTATION</scope>
    <source>
        <strain>ATCC BAA-935 / AF2122/97</strain>
    </source>
</reference>
<protein>
    <recommendedName>
        <fullName>Probable transport protein MmpL10</fullName>
    </recommendedName>
</protein>
<sequence>MVGCWVALALVLPMAVPSLAEMAQRHPVAVLPADAPSSVAVRQMAEAFHESGSENILVVLLTDEKGLGAADENVYHTLVDRLRNDAKDVVMLQDFLTTPPLREVLGSKDGKAWILPIGLAGDLGTPKSYHAYTDVERIVKRTVAGTTLTANVTGPAATVADLTDAGARDRASIELAIAVMLLVILMVIYRNPVTMLLPLVTIGASLMTAQALVAGVSLVGGLAVSNQAIVLLSAMIAGAGTDYAVFLISRYHEYVRLGEHPERAVQRAMMSVGKVIAASAATVGITFLGMRFAKLGVFSTVGPALAIGIAVSFLAAVTLLPAILVLASPRGWVAPRGERMATFWRRAGTRIVRRPKAYLGASLIGLVALASCASLAHFNYDDRKQLPPSDPSSVGYAAMEHHFSVNQTIPEYLIIHSAHDLRTPRGLADLEQLAQRVSQIPGVAMVRGVTRPNGETLEQARATYQAGQVGNRLGGASRMIDERTGDLNRLASGANLLADNLGDVRGQVSRAVAGVRSLVDALAYIQNQFGGNKTFNEIDNAARLVSNIHALGDALQVNFDGIANSFDWLDSVVAALDTSPVCDSNPMCGNARVQFHKLQTARDNGTLDKVVGLARQLQSTRSPQTVSAVVNDLGRSLNSVVRSLKSLGLDNPDAARARLISMQNGANDLASAGRQVADGVQMLVDQTKNMGIGLNQASAFLMAMGNDASQPSMAGFNVPPQVLKSEEFKKVAQAFISPDGHTVRYFIQTDLNPFSTAAMDQVNTIIDTAKGAQPNTSLADASISMSGYPVMLRDIRDYYERDMRLIVAVTVVVVILILMALLRAIVAPLYLVGSVVISYMSAIGLGVVVFQVFLGQELHWSVPGLAFVVLVAVGADYNMLLASRLRDESALGVRSSVIRTVRCTGGVITAAGLIFAASMSGLLFSSIGTVVQGGFIIGVGILIDTFVVRTITVPAMATLLGRASWWPGHPWQRCAPEEGQMSARMSARTKTVFQAVADGSKR</sequence>
<evidence type="ECO:0000255" key="1"/>
<evidence type="ECO:0000305" key="2"/>
<accession>P65373</accession>
<accession>A0A1R3XXL7</accession>
<accession>O50439</accession>
<accession>X2BGW1</accession>
<name>MMPLA_MYCBO</name>
<feature type="chain" id="PRO_0000103575" description="Probable transport protein MmpL10">
    <location>
        <begin position="1"/>
        <end position="1002"/>
    </location>
</feature>
<feature type="transmembrane region" description="Helical" evidence="1">
    <location>
        <begin position="1"/>
        <end position="21"/>
    </location>
</feature>
<feature type="transmembrane region" description="Helical" evidence="1">
    <location>
        <begin position="177"/>
        <end position="197"/>
    </location>
</feature>
<feature type="transmembrane region" description="Helical" evidence="1">
    <location>
        <begin position="199"/>
        <end position="219"/>
    </location>
</feature>
<feature type="transmembrane region" description="Helical" evidence="1">
    <location>
        <begin position="228"/>
        <end position="248"/>
    </location>
</feature>
<feature type="transmembrane region" description="Helical" evidence="1">
    <location>
        <begin position="268"/>
        <end position="288"/>
    </location>
</feature>
<feature type="transmembrane region" description="Helical" evidence="1">
    <location>
        <begin position="306"/>
        <end position="326"/>
    </location>
</feature>
<feature type="transmembrane region" description="Helical" evidence="1">
    <location>
        <begin position="358"/>
        <end position="378"/>
    </location>
</feature>
<feature type="transmembrane region" description="Helical" evidence="1">
    <location>
        <begin position="806"/>
        <end position="826"/>
    </location>
</feature>
<feature type="transmembrane region" description="Helical" evidence="1">
    <location>
        <begin position="835"/>
        <end position="855"/>
    </location>
</feature>
<feature type="transmembrane region" description="Helical" evidence="1">
    <location>
        <begin position="862"/>
        <end position="882"/>
    </location>
</feature>
<feature type="transmembrane region" description="Helical" evidence="1">
    <location>
        <begin position="901"/>
        <end position="921"/>
    </location>
</feature>
<feature type="transmembrane region" description="Helical" evidence="1">
    <location>
        <begin position="923"/>
        <end position="943"/>
    </location>
</feature>
<proteinExistence type="inferred from homology"/>